<sequence>MKKMMTFLKKAKVKAFTLVEMLVVLLIISVLFLLFVPNLTKQKEAVNDKGKAAVVKVVESQAELYSLEKNEDASLRKLQADGRITEEQAKAYKEYNDKNGGANRKVND</sequence>
<evidence type="ECO:0000250" key="1">
    <source>
        <dbReference type="UniProtKB" id="P25955"/>
    </source>
</evidence>
<evidence type="ECO:0000250" key="2">
    <source>
        <dbReference type="UniProtKB" id="Q8DN88"/>
    </source>
</evidence>
<evidence type="ECO:0000255" key="3"/>
<evidence type="ECO:0000269" key="4">
    <source>
    </source>
</evidence>
<evidence type="ECO:0000269" key="5">
    <source>
    </source>
</evidence>
<evidence type="ECO:0000303" key="6">
    <source>
    </source>
</evidence>
<evidence type="ECO:0000305" key="7"/>
<evidence type="ECO:0000312" key="8">
    <source>
        <dbReference type="EMBL" id="AAK76115.1"/>
    </source>
</evidence>
<evidence type="ECO:0000312" key="9">
    <source>
        <dbReference type="Proteomes" id="UP000000585"/>
    </source>
</evidence>
<evidence type="ECO:0007744" key="10">
    <source>
        <dbReference type="PDB" id="5NCA"/>
    </source>
</evidence>
<evidence type="ECO:0007829" key="11">
    <source>
        <dbReference type="PDB" id="5NCA"/>
    </source>
</evidence>
<reference evidence="9" key="1">
    <citation type="journal article" date="2001" name="Science">
        <title>Complete genome sequence of a virulent isolate of Streptococcus pneumoniae.</title>
        <authorList>
            <person name="Tettelin H."/>
            <person name="Nelson K.E."/>
            <person name="Paulsen I.T."/>
            <person name="Eisen J.A."/>
            <person name="Read T.D."/>
            <person name="Peterson S.N."/>
            <person name="Heidelberg J.F."/>
            <person name="DeBoy R.T."/>
            <person name="Haft D.H."/>
            <person name="Dodson R.J."/>
            <person name="Durkin A.S."/>
            <person name="Gwinn M.L."/>
            <person name="Kolonay J.F."/>
            <person name="Nelson W.C."/>
            <person name="Peterson J.D."/>
            <person name="Umayam L.A."/>
            <person name="White O."/>
            <person name="Salzberg S.L."/>
            <person name="Lewis M.R."/>
            <person name="Radune D."/>
            <person name="Holtzapple E.K."/>
            <person name="Khouri H.M."/>
            <person name="Wolf A.M."/>
            <person name="Utterback T.R."/>
            <person name="Hansen C.L."/>
            <person name="McDonald L.A."/>
            <person name="Feldblyum T.V."/>
            <person name="Angiuoli S.V."/>
            <person name="Dickinson T."/>
            <person name="Hickey E.K."/>
            <person name="Holt I.E."/>
            <person name="Loftus B.J."/>
            <person name="Yang F."/>
            <person name="Smith H.O."/>
            <person name="Venter J.C."/>
            <person name="Dougherty B.A."/>
            <person name="Morrison D.A."/>
            <person name="Hollingshead S.K."/>
            <person name="Fraser C.M."/>
        </authorList>
    </citation>
    <scope>NUCLEOTIDE SEQUENCE [LARGE SCALE GENOMIC DNA]</scope>
    <source>
        <strain evidence="9">ATCC BAA-334 / TIGR4</strain>
    </source>
</reference>
<reference evidence="7" key="2">
    <citation type="journal article" date="2014" name="Proc. Natl. Acad. Sci. U.S.A.">
        <title>Secretion of a pneumococcal type II secretion system pilus correlates with DNA uptake during transformation.</title>
        <authorList>
            <person name="Balaban M."/>
            <person name="Baettig P."/>
            <person name="Muschiol S."/>
            <person name="Tirier S.M."/>
            <person name="Wartha F."/>
            <person name="Normark S."/>
            <person name="Henriques-Normark B."/>
        </authorList>
    </citation>
    <scope>FUNCTION</scope>
    <scope>SUBCELLULAR LOCATION</scope>
    <scope>INDUCTION</scope>
    <scope>PROTEOLYTIC CLEAVAGE</scope>
    <scope>MUTAGENESIS OF 15-ALA-PHE-16; PHE-16 AND GLU-20</scope>
    <source>
        <strain evidence="7">BHN49</strain>
    </source>
</reference>
<reference evidence="10" key="3">
    <citation type="journal article" date="2017" name="J. Biol. Chem.">
        <title>Structure of the competence pilus major pilin ComGC in Streptococcus pneumoniae.</title>
        <authorList>
            <person name="Muschiol S."/>
            <person name="Erlendsson S."/>
            <person name="Aschtgen M.S."/>
            <person name="Oliveira V."/>
            <person name="Schmieder P."/>
            <person name="de Lichtenberg C."/>
            <person name="Teilum K."/>
            <person name="Boesen T."/>
            <person name="Akbey U."/>
            <person name="Henriques-Normark B."/>
        </authorList>
    </citation>
    <scope>STRUCTURE BY NMR OF 40-108</scope>
    <scope>FUNCTION</scope>
    <scope>SUBUNIT</scope>
    <scope>INDUCTION</scope>
    <scope>PROTEOLYTIC CLEAVAGE</scope>
</reference>
<protein>
    <recommendedName>
        <fullName evidence="7">Competence protein ComGC</fullName>
    </recommendedName>
    <alternativeName>
        <fullName evidence="6">Major pilin ComGC</fullName>
    </alternativeName>
</protein>
<accession>A0A0H2URU9</accession>
<organism evidence="9">
    <name type="scientific">Streptococcus pneumoniae serotype 4 (strain ATCC BAA-334 / TIGR4)</name>
    <dbReference type="NCBI Taxonomy" id="170187"/>
    <lineage>
        <taxon>Bacteria</taxon>
        <taxon>Bacillati</taxon>
        <taxon>Bacillota</taxon>
        <taxon>Bacilli</taxon>
        <taxon>Lactobacillales</taxon>
        <taxon>Streptococcaceae</taxon>
        <taxon>Streptococcus</taxon>
    </lineage>
</organism>
<feature type="signal peptide" evidence="3">
    <location>
        <begin position="1"/>
        <end position="13"/>
    </location>
</feature>
<feature type="chain" id="PRO_0000459510" description="Competence protein ComGC" evidence="3">
    <location>
        <begin position="14"/>
        <end position="108"/>
    </location>
</feature>
<feature type="transmembrane region" description="Helical" evidence="3">
    <location>
        <begin position="16"/>
        <end position="36"/>
    </location>
</feature>
<feature type="region of interest" description="May be involved in polymerization of ComGC" evidence="4">
    <location>
        <begin position="14"/>
        <end position="39"/>
    </location>
</feature>
<feature type="modified residue" description="N-methylphenylalanine" evidence="2">
    <location>
        <position position="16"/>
    </location>
</feature>
<feature type="mutagenesis site" description="Abolishes proteolytic cleavage and secretion." evidence="4">
    <original>AF</original>
    <variation>LA</variation>
    <location>
        <begin position="15"/>
        <end position="16"/>
    </location>
</feature>
<feature type="mutagenesis site" description="Undergoes proteolytic cleavage, but abolishes secretion." evidence="4">
    <original>F</original>
    <variation>A</variation>
    <location>
        <position position="16"/>
    </location>
</feature>
<feature type="mutagenesis site" description="Reduces proteolytic cleavage and abolishes secretion." evidence="4">
    <original>E</original>
    <variation>A</variation>
    <location>
        <position position="20"/>
    </location>
</feature>
<feature type="mutagenesis site" description="Undergoes proteolytic cleavage, but abolishes secretion." evidence="4">
    <original>E</original>
    <variation>D</variation>
    <location>
        <position position="20"/>
    </location>
</feature>
<feature type="helix" evidence="11">
    <location>
        <begin position="56"/>
        <end position="69"/>
    </location>
</feature>
<feature type="helix" evidence="11">
    <location>
        <begin position="75"/>
        <end position="81"/>
    </location>
</feature>
<feature type="helix" evidence="11">
    <location>
        <begin position="86"/>
        <end position="89"/>
    </location>
</feature>
<feature type="helix" evidence="11">
    <location>
        <begin position="90"/>
        <end position="92"/>
    </location>
</feature>
<feature type="helix" evidence="11">
    <location>
        <begin position="93"/>
        <end position="99"/>
    </location>
</feature>
<feature type="strand" evidence="11">
    <location>
        <begin position="101"/>
        <end position="103"/>
    </location>
</feature>
<dbReference type="EMBL" id="AE005672">
    <property type="protein sequence ID" value="AAK76115.1"/>
    <property type="molecule type" value="Genomic_DNA"/>
</dbReference>
<dbReference type="RefSeq" id="WP_000738627.1">
    <property type="nucleotide sequence ID" value="NZ_CP155539.1"/>
</dbReference>
<dbReference type="PDB" id="5NCA">
    <property type="method" value="NMR"/>
    <property type="chains" value="A=40-108"/>
</dbReference>
<dbReference type="PDBsum" id="5NCA"/>
<dbReference type="BMRB" id="A0A0H2URU9"/>
<dbReference type="SMR" id="A0A0H2URU9"/>
<dbReference type="PaxDb" id="170187-SP_2051"/>
<dbReference type="EnsemblBacteria" id="AAK76115">
    <property type="protein sequence ID" value="AAK76115"/>
    <property type="gene ID" value="SP_2051"/>
</dbReference>
<dbReference type="KEGG" id="spn:SP_2051"/>
<dbReference type="eggNOG" id="COG4537">
    <property type="taxonomic scope" value="Bacteria"/>
</dbReference>
<dbReference type="PhylomeDB" id="A0A0H2URU9"/>
<dbReference type="BioCyc" id="SPNE170187:G1FZB-2120-MONOMER"/>
<dbReference type="Proteomes" id="UP000000585">
    <property type="component" value="Chromosome"/>
</dbReference>
<dbReference type="GO" id="GO:0009986">
    <property type="term" value="C:cell surface"/>
    <property type="evidence" value="ECO:0007669"/>
    <property type="project" value="UniProtKB-SubCell"/>
</dbReference>
<dbReference type="GO" id="GO:0005576">
    <property type="term" value="C:extracellular region"/>
    <property type="evidence" value="ECO:0007669"/>
    <property type="project" value="UniProtKB-SubCell"/>
</dbReference>
<dbReference type="GO" id="GO:0009289">
    <property type="term" value="C:pilus"/>
    <property type="evidence" value="ECO:0007669"/>
    <property type="project" value="UniProtKB-SubCell"/>
</dbReference>
<dbReference type="GO" id="GO:0005886">
    <property type="term" value="C:plasma membrane"/>
    <property type="evidence" value="ECO:0007669"/>
    <property type="project" value="UniProtKB-SubCell"/>
</dbReference>
<dbReference type="GO" id="GO:0015627">
    <property type="term" value="C:type II protein secretion system complex"/>
    <property type="evidence" value="ECO:0007669"/>
    <property type="project" value="InterPro"/>
</dbReference>
<dbReference type="GO" id="GO:0030420">
    <property type="term" value="P:establishment of competence for transformation"/>
    <property type="evidence" value="ECO:0007669"/>
    <property type="project" value="UniProtKB-KW"/>
</dbReference>
<dbReference type="GO" id="GO:0015628">
    <property type="term" value="P:protein secretion by the type II secretion system"/>
    <property type="evidence" value="ECO:0007669"/>
    <property type="project" value="InterPro"/>
</dbReference>
<dbReference type="Gene3D" id="3.30.700.10">
    <property type="entry name" value="Glycoprotein, Type 4 Pilin"/>
    <property type="match status" value="1"/>
</dbReference>
<dbReference type="InterPro" id="IPR000983">
    <property type="entry name" value="Bac_GSPG_pilin"/>
</dbReference>
<dbReference type="InterPro" id="IPR016940">
    <property type="entry name" value="ComGC"/>
</dbReference>
<dbReference type="InterPro" id="IPR012902">
    <property type="entry name" value="N_methyl_site"/>
</dbReference>
<dbReference type="InterPro" id="IPR045584">
    <property type="entry name" value="Pilin-like"/>
</dbReference>
<dbReference type="NCBIfam" id="TIGR02532">
    <property type="entry name" value="IV_pilin_GFxxxE"/>
    <property type="match status" value="1"/>
</dbReference>
<dbReference type="NCBIfam" id="NF040999">
    <property type="entry name" value="pilin_ComGC"/>
    <property type="match status" value="1"/>
</dbReference>
<dbReference type="Pfam" id="PF07963">
    <property type="entry name" value="N_methyl"/>
    <property type="match status" value="1"/>
</dbReference>
<dbReference type="PIRSF" id="PIRSF029928">
    <property type="entry name" value="Late_competence_ComGC"/>
    <property type="match status" value="1"/>
</dbReference>
<dbReference type="PRINTS" id="PR00813">
    <property type="entry name" value="BCTERIALGSPG"/>
</dbReference>
<dbReference type="SUPFAM" id="SSF54523">
    <property type="entry name" value="Pili subunits"/>
    <property type="match status" value="1"/>
</dbReference>
<name>COMGC_STRPN</name>
<keyword id="KW-0002">3D-structure</keyword>
<keyword id="KW-1003">Cell membrane</keyword>
<keyword id="KW-0178">Competence</keyword>
<keyword id="KW-0281">Fimbrium</keyword>
<keyword id="KW-0472">Membrane</keyword>
<keyword id="KW-0488">Methylation</keyword>
<keyword id="KW-1185">Reference proteome</keyword>
<keyword id="KW-0964">Secreted</keyword>
<keyword id="KW-0732">Signal</keyword>
<keyword id="KW-0812">Transmembrane</keyword>
<keyword id="KW-1133">Transmembrane helix</keyword>
<comment type="function">
    <text evidence="1 2 4 5">Major component of the type IV-like pilus (T4P) that plays a role in transformation (PubMed:28659339). Transformation pili are dynamically extended and retracted, perhaps thereby promoting DNA uptake and transformation (By similarity). Required for transformation (PubMed:24550320). Required for DNA binding (By similarity).</text>
</comment>
<comment type="subunit">
    <text evidence="2 5">The transformation pili are flexible filaments, consisting mainly of the major pilin ComGC and smaller amounts of the minor pilins, including at least ComGD, ComGF and ComGG, and perhaps ComGE (By similarity). Homodimer (PubMed:28659339). Forms higher-order multimers (PubMed:28659339). Interacts with ComGG; the interaction is probably direct (By similarity).</text>
</comment>
<comment type="subcellular location">
    <subcellularLocation>
        <location evidence="1">Cell membrane</location>
        <topology evidence="1 3">Single-pass membrane protein</topology>
    </subcellularLocation>
    <subcellularLocation>
        <location evidence="1">Cell surface</location>
    </subcellularLocation>
    <subcellularLocation>
        <location evidence="2">Fimbrium</location>
    </subcellularLocation>
    <subcellularLocation>
        <location evidence="4">Secreted</location>
    </subcellularLocation>
    <text evidence="1 4">The unprocessed form is an integral membrane protein with its C-terminus outside the membrane. Upon cleavage, it is translocated to the outer face of the membrane (By similarity). ComGC release into culture supernatant is probably physiological because it is still observed in an autolysis-deficient lytA mutant background (PubMed:24550320).</text>
</comment>
<comment type="induction">
    <text evidence="4 5">Up-regulated by competence-stimulating peptide (CSP) (PubMed:24550320, PubMed:28659339). Part of the putative comGA-comGB-comGC-comGD-comGE-comGF-comGG operon (PubMed:24550320, PubMed:28659339).</text>
</comment>
<comment type="PTM">
    <text evidence="4 5">Undergoes proteolytic cleavage.</text>
</comment>
<comment type="similarity">
    <text evidence="7">Belongs to the ComGC family.</text>
</comment>
<proteinExistence type="evidence at protein level"/>
<gene>
    <name evidence="6" type="primary">comGC</name>
    <name evidence="8" type="synonym">cglC</name>
    <name evidence="8" type="ordered locus">SP_2051</name>
</gene>